<dbReference type="EC" id="1.11.1.9" evidence="1"/>
<dbReference type="SMR" id="C0HLL8"/>
<dbReference type="GO" id="GO:0004602">
    <property type="term" value="F:glutathione peroxidase activity"/>
    <property type="evidence" value="ECO:0000314"/>
    <property type="project" value="UniProtKB"/>
</dbReference>
<sequence length="49" mass="5579">TELSGAPLDLYQYRGQVLLIPQFTGLLYQKSQQEGDVVDGLPSHQFHQY</sequence>
<protein>
    <recommendedName>
        <fullName evidence="2">Glutathione peroxidase</fullName>
        <ecNumber evidence="1">1.11.1.9</ecNumber>
    </recommendedName>
</protein>
<evidence type="ECO:0000269" key="1">
    <source>
    </source>
</evidence>
<evidence type="ECO:0000303" key="2">
    <source>
    </source>
</evidence>
<evidence type="ECO:0000305" key="3"/>
<organism evidence="2">
    <name type="scientific">Lactiplantibacillus plantarum</name>
    <name type="common">Lactobacillus plantarum</name>
    <dbReference type="NCBI Taxonomy" id="1590"/>
    <lineage>
        <taxon>Bacteria</taxon>
        <taxon>Bacillati</taxon>
        <taxon>Bacillota</taxon>
        <taxon>Bacilli</taxon>
        <taxon>Lactobacillales</taxon>
        <taxon>Lactobacillaceae</taxon>
        <taxon>Lactiplantibacillus</taxon>
    </lineage>
</organism>
<feature type="chain" id="PRO_0000448247" description="Glutathione peroxidase">
    <location>
        <begin position="1"/>
        <end position="49"/>
    </location>
</feature>
<feature type="non-terminal residue" evidence="2">
    <location>
        <position position="49"/>
    </location>
</feature>
<proteinExistence type="evidence at protein level"/>
<name>GPX_LACPN</name>
<comment type="function">
    <text evidence="1">Glutathione peroxidase which may protect the cell from oxidative damage.</text>
</comment>
<comment type="catalytic activity">
    <reaction evidence="1">
        <text>2 glutathione + H2O2 = glutathione disulfide + 2 H2O</text>
        <dbReference type="Rhea" id="RHEA:16833"/>
        <dbReference type="ChEBI" id="CHEBI:15377"/>
        <dbReference type="ChEBI" id="CHEBI:16240"/>
        <dbReference type="ChEBI" id="CHEBI:57925"/>
        <dbReference type="ChEBI" id="CHEBI:58297"/>
        <dbReference type="EC" id="1.11.1.9"/>
    </reaction>
</comment>
<comment type="activity regulation">
    <text evidence="1">Inhibited by Cu(2+), SDS and DTT. Activity is slightly increased by Fe(2+), Mn(2+), triton X-100 and EDTA.</text>
</comment>
<comment type="biophysicochemical properties">
    <phDependence>
        <text evidence="1">Optimum pH is 6.</text>
    </phDependence>
    <temperatureDependence>
        <text evidence="1">Optimum temperature is 40 degrees Celsius.</text>
    </temperatureDependence>
</comment>
<comment type="similarity">
    <text evidence="3">Belongs to the glutathione peroxidase family.</text>
</comment>
<keyword id="KW-0903">Direct protein sequencing</keyword>
<keyword id="KW-0560">Oxidoreductase</keyword>
<reference evidence="3" key="1">
    <citation type="journal article" date="2020" name="Front. Bioeng. Biotechnol.">
        <title>Stress-Based Production, and Characterization of Glutathione Peroxidase and Glutathione S-Transferase Enzymes From Lactobacillus plantarum.</title>
        <authorList>
            <person name="Al-Madboly L.A."/>
            <person name="Ali S.M."/>
            <person name="Fakharany E.M.E."/>
            <person name="Ragab A.E."/>
            <person name="Khedr E.G."/>
            <person name="Elokely K.M."/>
        </authorList>
    </citation>
    <scope>PROTEIN SEQUENCE</scope>
    <scope>FUNCTION</scope>
    <scope>CATALYTIC ACTIVITY</scope>
    <scope>ACTIVITY REGULATION</scope>
    <scope>BIOPHYSICOCHEMICAL PROPERTIES</scope>
    <source>
        <strain evidence="2">KU720558</strain>
    </source>
</reference>
<accession>C0HLL8</accession>